<gene>
    <name evidence="1" type="primary">leuS</name>
    <name type="ordered locus">Igni_0150</name>
</gene>
<comment type="catalytic activity">
    <reaction evidence="1">
        <text>tRNA(Leu) + L-leucine + ATP = L-leucyl-tRNA(Leu) + AMP + diphosphate</text>
        <dbReference type="Rhea" id="RHEA:11688"/>
        <dbReference type="Rhea" id="RHEA-COMP:9613"/>
        <dbReference type="Rhea" id="RHEA-COMP:9622"/>
        <dbReference type="ChEBI" id="CHEBI:30616"/>
        <dbReference type="ChEBI" id="CHEBI:33019"/>
        <dbReference type="ChEBI" id="CHEBI:57427"/>
        <dbReference type="ChEBI" id="CHEBI:78442"/>
        <dbReference type="ChEBI" id="CHEBI:78494"/>
        <dbReference type="ChEBI" id="CHEBI:456215"/>
        <dbReference type="EC" id="6.1.1.4"/>
    </reaction>
</comment>
<comment type="subcellular location">
    <subcellularLocation>
        <location evidence="1">Cytoplasm</location>
    </subcellularLocation>
</comment>
<comment type="similarity">
    <text evidence="1">Belongs to the class-I aminoacyl-tRNA synthetase family.</text>
</comment>
<feature type="chain" id="PRO_0000334840" description="Leucine--tRNA ligase">
    <location>
        <begin position="1"/>
        <end position="1022"/>
    </location>
</feature>
<feature type="short sequence motif" description="'HIGH' region">
    <location>
        <begin position="47"/>
        <end position="57"/>
    </location>
</feature>
<feature type="short sequence motif" description="'KMSKS' region">
    <location>
        <begin position="697"/>
        <end position="701"/>
    </location>
</feature>
<feature type="binding site" evidence="1">
    <location>
        <position position="700"/>
    </location>
    <ligand>
        <name>ATP</name>
        <dbReference type="ChEBI" id="CHEBI:30616"/>
    </ligand>
</feature>
<reference key="1">
    <citation type="journal article" date="2008" name="Genome Biol.">
        <title>A genomic analysis of the archaeal system Ignicoccus hospitalis-Nanoarchaeum equitans.</title>
        <authorList>
            <person name="Podar M."/>
            <person name="Anderson I."/>
            <person name="Makarova K.S."/>
            <person name="Elkins J.G."/>
            <person name="Ivanova N."/>
            <person name="Wall M.A."/>
            <person name="Lykidis A."/>
            <person name="Mavromatis K."/>
            <person name="Sun H."/>
            <person name="Hudson M.E."/>
            <person name="Chen W."/>
            <person name="Deciu C."/>
            <person name="Hutchison D."/>
            <person name="Eads J.R."/>
            <person name="Anderson A."/>
            <person name="Fernandes F."/>
            <person name="Szeto E."/>
            <person name="Lapidus A."/>
            <person name="Kyrpides N.C."/>
            <person name="Saier M.H. Jr."/>
            <person name="Richardson P.M."/>
            <person name="Rachel R."/>
            <person name="Huber H."/>
            <person name="Eisen J.A."/>
            <person name="Koonin E.V."/>
            <person name="Keller M."/>
            <person name="Stetter K.O."/>
        </authorList>
    </citation>
    <scope>NUCLEOTIDE SEQUENCE [LARGE SCALE GENOMIC DNA]</scope>
    <source>
        <strain>KIN4/I / DSM 18386 / JCM 14125</strain>
    </source>
</reference>
<name>SYL_IGNH4</name>
<accession>A8A8T2</accession>
<evidence type="ECO:0000255" key="1">
    <source>
        <dbReference type="HAMAP-Rule" id="MF_00049"/>
    </source>
</evidence>
<sequence>MGDFVEDFVRYLKEIAAKWREEWERARLHEADVDPNRPKFYVTAAFPYPNSPMHLGHSRTYSVTDAYARFKRMRGFNVLFPMGFHYTGTPIIAMSEKVKQGLQALRSLGEVKTILEEIWKIKVERNLSIGEAIKEYLRGAGREDLMDKTDSIEYLVLFYKVFEIPVEDLEKLTEPLSMANYFASITEEGMKELGYMIDWRRKFTTVDPDFQKFITWQFLKLYDLGYVEKGTHPVAWDPVYDTPVSQHDTKGDVEPEIEEYDVILFKLKDEDLYLPAATLRAETVFGVTNVWLNPEAEYEVVEVDGKRWVLSKKAAYKIKFQKDEVKSLGPIDPKKLLKKMVINPATEEEVPVLPARFVDPNVATGVVMSVPAHAPFDYVALKELEGDPEYSDIVKSIELVQVIRVPEEGLLVPQLVEKLGIRDTSDKKKLEEATREVYSKEYRKGRMLESVLERVKGDERLRAALKAFLGNDPVPDAREKTAKWLKLFGAGDVFYEIKNAPVYSRFGNEVVVKVLKDQWFLNYGDPQWKELARKALARMRIIPENFLKEFEDTIDWLQKRACARTRGLGTPLPWDKRWIIESLSDSTIYMAFYTVVNILRGASVEPEKLQPEVWDYIMLGKGNPKELEEKYGISAAVLEEARRSFDYWYPVDSRHSGKDLIRNHLTFFIFNHAAIFPEDKWPRQIVVNGFVNLEGKKMSKSLGNIIPITVAIRSFAPDIIRLVLLHSAELGSDADFRTEMVSRAISNLREIKSIVEKVKDYNGPRPANLTMLDAWYLSSFVKDVENVTNMMEDLKIREVTNVLYFILLNRTKEYLNALEAMGRGLDEVAKWVLRYTVERWVKMMTPFTPFFAEEMWHELGFNTFVVTEPWPVKDEELVNPLAEAAKEYVEKVIEDIKEIIKVAKIEKPKKVRIEVASPEQVKMLKMAVEFVNSGKSLREFMAEATKVFGKKEAKSLRQAFERATSLSESMRSVIARGEFDEKAVLEEFKRLIEEEVGSEVEIRRYEGGKKRPEPLRPAIYVE</sequence>
<dbReference type="EC" id="6.1.1.4" evidence="1"/>
<dbReference type="EMBL" id="CP000816">
    <property type="protein sequence ID" value="ABU81334.1"/>
    <property type="molecule type" value="Genomic_DNA"/>
</dbReference>
<dbReference type="RefSeq" id="WP_011998186.1">
    <property type="nucleotide sequence ID" value="NC_009776.1"/>
</dbReference>
<dbReference type="SMR" id="A8A8T2"/>
<dbReference type="STRING" id="453591.Igni_0150"/>
<dbReference type="GeneID" id="5562862"/>
<dbReference type="KEGG" id="iho:Igni_0150"/>
<dbReference type="eggNOG" id="arCOG00809">
    <property type="taxonomic scope" value="Archaea"/>
</dbReference>
<dbReference type="HOGENOM" id="CLU_004174_0_0_2"/>
<dbReference type="OrthoDB" id="23906at2157"/>
<dbReference type="PhylomeDB" id="A8A8T2"/>
<dbReference type="Proteomes" id="UP000000262">
    <property type="component" value="Chromosome"/>
</dbReference>
<dbReference type="GO" id="GO:0005737">
    <property type="term" value="C:cytoplasm"/>
    <property type="evidence" value="ECO:0007669"/>
    <property type="project" value="UniProtKB-SubCell"/>
</dbReference>
<dbReference type="GO" id="GO:0002161">
    <property type="term" value="F:aminoacyl-tRNA deacylase activity"/>
    <property type="evidence" value="ECO:0007669"/>
    <property type="project" value="InterPro"/>
</dbReference>
<dbReference type="GO" id="GO:0005524">
    <property type="term" value="F:ATP binding"/>
    <property type="evidence" value="ECO:0007669"/>
    <property type="project" value="UniProtKB-UniRule"/>
</dbReference>
<dbReference type="GO" id="GO:0004823">
    <property type="term" value="F:leucine-tRNA ligase activity"/>
    <property type="evidence" value="ECO:0007669"/>
    <property type="project" value="UniProtKB-UniRule"/>
</dbReference>
<dbReference type="GO" id="GO:0006429">
    <property type="term" value="P:leucyl-tRNA aminoacylation"/>
    <property type="evidence" value="ECO:0007669"/>
    <property type="project" value="UniProtKB-UniRule"/>
</dbReference>
<dbReference type="CDD" id="cd07959">
    <property type="entry name" value="Anticodon_Ia_Leu_AEc"/>
    <property type="match status" value="1"/>
</dbReference>
<dbReference type="Gene3D" id="3.30.2320.20">
    <property type="entry name" value="Class I aminoacyl-tRNA synthetases (RS)"/>
    <property type="match status" value="1"/>
</dbReference>
<dbReference type="Gene3D" id="3.40.50.620">
    <property type="entry name" value="HUPs"/>
    <property type="match status" value="1"/>
</dbReference>
<dbReference type="Gene3D" id="1.10.730.10">
    <property type="entry name" value="Isoleucyl-tRNA Synthetase, Domain 1"/>
    <property type="match status" value="1"/>
</dbReference>
<dbReference type="Gene3D" id="1.10.10.720">
    <property type="entry name" value="leucyl-tRNA synthetase"/>
    <property type="match status" value="1"/>
</dbReference>
<dbReference type="Gene3D" id="3.90.740.10">
    <property type="entry name" value="Valyl/Leucyl/Isoleucyl-tRNA synthetase, editing domain"/>
    <property type="match status" value="1"/>
</dbReference>
<dbReference type="HAMAP" id="MF_00049_A">
    <property type="entry name" value="Leu_tRNA_synth_A"/>
    <property type="match status" value="1"/>
</dbReference>
<dbReference type="InterPro" id="IPR002300">
    <property type="entry name" value="aa-tRNA-synth_Ia"/>
</dbReference>
<dbReference type="InterPro" id="IPR020791">
    <property type="entry name" value="Leu-tRNA-lgase_arc"/>
</dbReference>
<dbReference type="InterPro" id="IPR004493">
    <property type="entry name" value="Leu-tRNA-synth_Ia_arc/euk"/>
</dbReference>
<dbReference type="InterPro" id="IPR013155">
    <property type="entry name" value="M/V/L/I-tRNA-synth_anticd-bd"/>
</dbReference>
<dbReference type="InterPro" id="IPR015413">
    <property type="entry name" value="Methionyl/Leucyl_tRNA_Synth"/>
</dbReference>
<dbReference type="InterPro" id="IPR014729">
    <property type="entry name" value="Rossmann-like_a/b/a_fold"/>
</dbReference>
<dbReference type="InterPro" id="IPR009080">
    <property type="entry name" value="tRNAsynth_Ia_anticodon-bd"/>
</dbReference>
<dbReference type="InterPro" id="IPR009008">
    <property type="entry name" value="Val/Leu/Ile-tRNA-synth_edit"/>
</dbReference>
<dbReference type="NCBIfam" id="TIGR00395">
    <property type="entry name" value="leuS_arch"/>
    <property type="match status" value="1"/>
</dbReference>
<dbReference type="NCBIfam" id="NF008957">
    <property type="entry name" value="PRK12300.1"/>
    <property type="match status" value="1"/>
</dbReference>
<dbReference type="PANTHER" id="PTHR45794:SF1">
    <property type="entry name" value="LEUCINE--TRNA LIGASE, CYTOPLASMIC"/>
    <property type="match status" value="1"/>
</dbReference>
<dbReference type="PANTHER" id="PTHR45794">
    <property type="entry name" value="LEUCYL-TRNA SYNTHETASE"/>
    <property type="match status" value="1"/>
</dbReference>
<dbReference type="Pfam" id="PF08264">
    <property type="entry name" value="Anticodon_1"/>
    <property type="match status" value="1"/>
</dbReference>
<dbReference type="Pfam" id="PF00133">
    <property type="entry name" value="tRNA-synt_1"/>
    <property type="match status" value="1"/>
</dbReference>
<dbReference type="Pfam" id="PF09334">
    <property type="entry name" value="tRNA-synt_1g"/>
    <property type="match status" value="1"/>
</dbReference>
<dbReference type="SUPFAM" id="SSF47323">
    <property type="entry name" value="Anticodon-binding domain of a subclass of class I aminoacyl-tRNA synthetases"/>
    <property type="match status" value="1"/>
</dbReference>
<dbReference type="SUPFAM" id="SSF52374">
    <property type="entry name" value="Nucleotidylyl transferase"/>
    <property type="match status" value="1"/>
</dbReference>
<dbReference type="SUPFAM" id="SSF50677">
    <property type="entry name" value="ValRS/IleRS/LeuRS editing domain"/>
    <property type="match status" value="1"/>
</dbReference>
<keyword id="KW-0030">Aminoacyl-tRNA synthetase</keyword>
<keyword id="KW-0067">ATP-binding</keyword>
<keyword id="KW-0963">Cytoplasm</keyword>
<keyword id="KW-0436">Ligase</keyword>
<keyword id="KW-0547">Nucleotide-binding</keyword>
<keyword id="KW-0648">Protein biosynthesis</keyword>
<keyword id="KW-1185">Reference proteome</keyword>
<organism>
    <name type="scientific">Ignicoccus hospitalis (strain KIN4/I / DSM 18386 / JCM 14125)</name>
    <dbReference type="NCBI Taxonomy" id="453591"/>
    <lineage>
        <taxon>Archaea</taxon>
        <taxon>Thermoproteota</taxon>
        <taxon>Thermoprotei</taxon>
        <taxon>Desulfurococcales</taxon>
        <taxon>Desulfurococcaceae</taxon>
        <taxon>Ignicoccus</taxon>
    </lineage>
</organism>
<protein>
    <recommendedName>
        <fullName evidence="1">Leucine--tRNA ligase</fullName>
        <ecNumber evidence="1">6.1.1.4</ecNumber>
    </recommendedName>
    <alternativeName>
        <fullName evidence="1">Leucyl-tRNA synthetase</fullName>
        <shortName evidence="1">LeuRS</shortName>
    </alternativeName>
</protein>
<proteinExistence type="inferred from homology"/>